<proteinExistence type="inferred from homology"/>
<keyword id="KW-0067">ATP-binding</keyword>
<keyword id="KW-0436">Ligase</keyword>
<keyword id="KW-0547">Nucleotide-binding</keyword>
<keyword id="KW-0648">Protein biosynthesis</keyword>
<keyword id="KW-1185">Reference proteome</keyword>
<accession>A5G9K0</accession>
<organism>
    <name type="scientific">Geotalea uraniireducens (strain Rf4)</name>
    <name type="common">Geobacter uraniireducens</name>
    <dbReference type="NCBI Taxonomy" id="351605"/>
    <lineage>
        <taxon>Bacteria</taxon>
        <taxon>Pseudomonadati</taxon>
        <taxon>Thermodesulfobacteriota</taxon>
        <taxon>Desulfuromonadia</taxon>
        <taxon>Geobacterales</taxon>
        <taxon>Geobacteraceae</taxon>
        <taxon>Geotalea</taxon>
    </lineage>
</organism>
<comment type="function">
    <text evidence="1">Allows the formation of correctly charged Asn-tRNA(Asn) or Gln-tRNA(Gln) through the transamidation of misacylated Asp-tRNA(Asn) or Glu-tRNA(Gln) in organisms which lack either or both of asparaginyl-tRNA or glutaminyl-tRNA synthetases. The reaction takes place in the presence of glutamine and ATP through an activated phospho-Asp-tRNA(Asn) or phospho-Glu-tRNA(Gln).</text>
</comment>
<comment type="catalytic activity">
    <reaction evidence="1">
        <text>L-glutamyl-tRNA(Gln) + L-glutamine + ATP + H2O = L-glutaminyl-tRNA(Gln) + L-glutamate + ADP + phosphate + H(+)</text>
        <dbReference type="Rhea" id="RHEA:17521"/>
        <dbReference type="Rhea" id="RHEA-COMP:9681"/>
        <dbReference type="Rhea" id="RHEA-COMP:9684"/>
        <dbReference type="ChEBI" id="CHEBI:15377"/>
        <dbReference type="ChEBI" id="CHEBI:15378"/>
        <dbReference type="ChEBI" id="CHEBI:29985"/>
        <dbReference type="ChEBI" id="CHEBI:30616"/>
        <dbReference type="ChEBI" id="CHEBI:43474"/>
        <dbReference type="ChEBI" id="CHEBI:58359"/>
        <dbReference type="ChEBI" id="CHEBI:78520"/>
        <dbReference type="ChEBI" id="CHEBI:78521"/>
        <dbReference type="ChEBI" id="CHEBI:456216"/>
    </reaction>
</comment>
<comment type="catalytic activity">
    <reaction evidence="1">
        <text>L-aspartyl-tRNA(Asn) + L-glutamine + ATP + H2O = L-asparaginyl-tRNA(Asn) + L-glutamate + ADP + phosphate + 2 H(+)</text>
        <dbReference type="Rhea" id="RHEA:14513"/>
        <dbReference type="Rhea" id="RHEA-COMP:9674"/>
        <dbReference type="Rhea" id="RHEA-COMP:9677"/>
        <dbReference type="ChEBI" id="CHEBI:15377"/>
        <dbReference type="ChEBI" id="CHEBI:15378"/>
        <dbReference type="ChEBI" id="CHEBI:29985"/>
        <dbReference type="ChEBI" id="CHEBI:30616"/>
        <dbReference type="ChEBI" id="CHEBI:43474"/>
        <dbReference type="ChEBI" id="CHEBI:58359"/>
        <dbReference type="ChEBI" id="CHEBI:78515"/>
        <dbReference type="ChEBI" id="CHEBI:78516"/>
        <dbReference type="ChEBI" id="CHEBI:456216"/>
    </reaction>
</comment>
<comment type="subunit">
    <text evidence="1">Heterotrimer of A, B and C subunits.</text>
</comment>
<comment type="similarity">
    <text evidence="1">Belongs to the GatC family.</text>
</comment>
<evidence type="ECO:0000255" key="1">
    <source>
        <dbReference type="HAMAP-Rule" id="MF_00122"/>
    </source>
</evidence>
<dbReference type="EC" id="6.3.5.-" evidence="1"/>
<dbReference type="EMBL" id="CP000698">
    <property type="protein sequence ID" value="ABQ28468.1"/>
    <property type="molecule type" value="Genomic_DNA"/>
</dbReference>
<dbReference type="RefSeq" id="WP_011941098.1">
    <property type="nucleotide sequence ID" value="NC_009483.1"/>
</dbReference>
<dbReference type="SMR" id="A5G9K0"/>
<dbReference type="STRING" id="351605.Gura_4325"/>
<dbReference type="KEGG" id="gur:Gura_4325"/>
<dbReference type="HOGENOM" id="CLU_105899_1_2_7"/>
<dbReference type="OrthoDB" id="9813938at2"/>
<dbReference type="Proteomes" id="UP000006695">
    <property type="component" value="Chromosome"/>
</dbReference>
<dbReference type="GO" id="GO:0050566">
    <property type="term" value="F:asparaginyl-tRNA synthase (glutamine-hydrolyzing) activity"/>
    <property type="evidence" value="ECO:0007669"/>
    <property type="project" value="RHEA"/>
</dbReference>
<dbReference type="GO" id="GO:0005524">
    <property type="term" value="F:ATP binding"/>
    <property type="evidence" value="ECO:0007669"/>
    <property type="project" value="UniProtKB-KW"/>
</dbReference>
<dbReference type="GO" id="GO:0050567">
    <property type="term" value="F:glutaminyl-tRNA synthase (glutamine-hydrolyzing) activity"/>
    <property type="evidence" value="ECO:0007669"/>
    <property type="project" value="UniProtKB-UniRule"/>
</dbReference>
<dbReference type="GO" id="GO:0070681">
    <property type="term" value="P:glutaminyl-tRNAGln biosynthesis via transamidation"/>
    <property type="evidence" value="ECO:0007669"/>
    <property type="project" value="TreeGrafter"/>
</dbReference>
<dbReference type="GO" id="GO:0006450">
    <property type="term" value="P:regulation of translational fidelity"/>
    <property type="evidence" value="ECO:0007669"/>
    <property type="project" value="InterPro"/>
</dbReference>
<dbReference type="GO" id="GO:0006412">
    <property type="term" value="P:translation"/>
    <property type="evidence" value="ECO:0007669"/>
    <property type="project" value="UniProtKB-UniRule"/>
</dbReference>
<dbReference type="Gene3D" id="1.10.20.60">
    <property type="entry name" value="Glu-tRNAGln amidotransferase C subunit, N-terminal domain"/>
    <property type="match status" value="1"/>
</dbReference>
<dbReference type="HAMAP" id="MF_00122">
    <property type="entry name" value="GatC"/>
    <property type="match status" value="1"/>
</dbReference>
<dbReference type="InterPro" id="IPR036113">
    <property type="entry name" value="Asp/Glu-ADT_sf_sub_c"/>
</dbReference>
<dbReference type="InterPro" id="IPR003837">
    <property type="entry name" value="GatC"/>
</dbReference>
<dbReference type="NCBIfam" id="TIGR00135">
    <property type="entry name" value="gatC"/>
    <property type="match status" value="1"/>
</dbReference>
<dbReference type="PANTHER" id="PTHR15004">
    <property type="entry name" value="GLUTAMYL-TRNA(GLN) AMIDOTRANSFERASE SUBUNIT C, MITOCHONDRIAL"/>
    <property type="match status" value="1"/>
</dbReference>
<dbReference type="PANTHER" id="PTHR15004:SF0">
    <property type="entry name" value="GLUTAMYL-TRNA(GLN) AMIDOTRANSFERASE SUBUNIT C, MITOCHONDRIAL"/>
    <property type="match status" value="1"/>
</dbReference>
<dbReference type="Pfam" id="PF02686">
    <property type="entry name" value="GatC"/>
    <property type="match status" value="1"/>
</dbReference>
<dbReference type="SUPFAM" id="SSF141000">
    <property type="entry name" value="Glu-tRNAGln amidotransferase C subunit"/>
    <property type="match status" value="1"/>
</dbReference>
<feature type="chain" id="PRO_1000076183" description="Aspartyl/glutamyl-tRNA(Asn/Gln) amidotransferase subunit C">
    <location>
        <begin position="1"/>
        <end position="95"/>
    </location>
</feature>
<gene>
    <name evidence="1" type="primary">gatC</name>
    <name type="ordered locus">Gura_4325</name>
</gene>
<protein>
    <recommendedName>
        <fullName evidence="1">Aspartyl/glutamyl-tRNA(Asn/Gln) amidotransferase subunit C</fullName>
        <shortName evidence="1">Asp/Glu-ADT subunit C</shortName>
        <ecNumber evidence="1">6.3.5.-</ecNumber>
    </recommendedName>
</protein>
<sequence length="95" mass="10438">MKITKAEVEHVALLARLELTEQEAETFTGQMDAILAYVDKLNELDTDGIVPTAHAVPMENAFRADEVTPSIGIENALGNAPKRAESFFRVPKVIE</sequence>
<name>GATC_GEOUR</name>
<reference key="1">
    <citation type="submission" date="2007-05" db="EMBL/GenBank/DDBJ databases">
        <title>Complete sequence of Geobacter uraniireducens Rf4.</title>
        <authorList>
            <consortium name="US DOE Joint Genome Institute"/>
            <person name="Copeland A."/>
            <person name="Lucas S."/>
            <person name="Lapidus A."/>
            <person name="Barry K."/>
            <person name="Detter J.C."/>
            <person name="Glavina del Rio T."/>
            <person name="Hammon N."/>
            <person name="Israni S."/>
            <person name="Dalin E."/>
            <person name="Tice H."/>
            <person name="Pitluck S."/>
            <person name="Chertkov O."/>
            <person name="Brettin T."/>
            <person name="Bruce D."/>
            <person name="Han C."/>
            <person name="Schmutz J."/>
            <person name="Larimer F."/>
            <person name="Land M."/>
            <person name="Hauser L."/>
            <person name="Kyrpides N."/>
            <person name="Mikhailova N."/>
            <person name="Shelobolina E."/>
            <person name="Aklujkar M."/>
            <person name="Lovley D."/>
            <person name="Richardson P."/>
        </authorList>
    </citation>
    <scope>NUCLEOTIDE SEQUENCE [LARGE SCALE GENOMIC DNA]</scope>
    <source>
        <strain>ATCC BAA-1134 / JCM 13001 / Rf4</strain>
    </source>
</reference>